<proteinExistence type="evidence at protein level"/>
<evidence type="ECO:0000255" key="1">
    <source>
        <dbReference type="PROSITE-ProRule" id="PRU01258"/>
    </source>
</evidence>
<evidence type="ECO:0000269" key="2">
    <source>
    </source>
</evidence>
<evidence type="ECO:0000269" key="3">
    <source>
    </source>
</evidence>
<evidence type="ECO:0000269" key="4">
    <source>
    </source>
</evidence>
<evidence type="ECO:0000303" key="5">
    <source>
    </source>
</evidence>
<evidence type="ECO:0000305" key="6"/>
<evidence type="ECO:0000305" key="7">
    <source>
    </source>
</evidence>
<evidence type="ECO:0007744" key="8">
    <source>
        <dbReference type="PDB" id="3OA5"/>
    </source>
</evidence>
<evidence type="ECO:0007744" key="9">
    <source>
        <dbReference type="PDB" id="4A5Q"/>
    </source>
</evidence>
<evidence type="ECO:0007829" key="10">
    <source>
        <dbReference type="PDB" id="3OA5"/>
    </source>
</evidence>
<comment type="function">
    <text evidence="2 4 7">Part of an orally active toxin complex (TC) with strong insecticidal effects on larvae of the Coleoptera Costelytra zealandica, Acrossidius tasmania and Adoryphorus couloni and some Lepidoptera larvae (PubMed:21278295). The TC has an endochitinase activity (Probable) (PubMed:21278295, PubMed:22158901). This subunit might aid infection by degradation of the larval peritrophic membrane (Probable).</text>
</comment>
<comment type="catalytic activity">
    <reaction evidence="7">
        <text>Random endo-hydrolysis of N-acetyl-beta-D-glucosaminide (1-&gt;4)-beta-linkages in chitin and chitodextrins.</text>
        <dbReference type="EC" id="3.2.1.14"/>
    </reaction>
</comment>
<comment type="activity regulation">
    <text evidence="2">Toxin complex is secreted when grown at 25 degrees Celsius or less; at higher temperatures the proteins are present intracellularly but not secreted.</text>
</comment>
<comment type="biophysicochemical properties">
    <kinetics>
        <KM evidence="3">580 uM for 4-methylumbelliferyl-beta-D-N,N',N''-triacetylchitotrioside</KM>
        <text evidence="3">In the intact toxin complex the combined chitinase activity of Chi1 and Chi2 is slightly reduced.</text>
    </kinetics>
    <phDependence>
        <text evidence="3">Optimum pH is 6.0, in the intact toxin complex optimum pH is pH 4.0 to pH 8.0.</text>
    </phDependence>
</comment>
<comment type="subunit">
    <text evidence="2 4">Semipurified toxin complex consists of at least YenA1-YenA2-YenB-YenC1-YenC2-Chi1-Chi2 (PubMed:21278295). The Yen-TC:K9 subcomplex is about 26 nm tall and 22 nm in diameter with 5-fold symmetry and 5 copies of YenA1, YenA2, Chi1 and Chi2; the chitinase subunits may be solvent accessible on the exterior the complex (PubMed:22158901). The Yen-TC:K9 subcomplex has no insecticidal activity (PubMed:22158901). The native complex with additional YenB, YenC1 and YenC2 subunits is 16 nm taller and is insecticidal; the toxicity-conferring subunits are present at about 1 copy each (PubMed:22158901).</text>
</comment>
<comment type="subcellular location">
    <subcellularLocation>
        <location evidence="2">Secreted</location>
    </subcellularLocation>
    <text evidence="2">Secreted when grown at 25 degrees Celsius or less, but not when grown at 30 or 37 degrees Celsius.</text>
</comment>
<comment type="disruption phenotype">
    <text evidence="2">Cells with a disrupted yenA1-yenA2-chi2-yenB-yenC1-yenC2 locus are no longer pathogenic in C.zealandica larvae; chi1 was not tested.</text>
</comment>
<comment type="similarity">
    <text evidence="6">Belongs to the glycosyl hydrolase 18 family.</text>
</comment>
<organism>
    <name type="scientific">Yersinia entomophaga</name>
    <dbReference type="NCBI Taxonomy" id="935293"/>
    <lineage>
        <taxon>Bacteria</taxon>
        <taxon>Pseudomonadati</taxon>
        <taxon>Pseudomonadota</taxon>
        <taxon>Gammaproteobacteria</taxon>
        <taxon>Enterobacterales</taxon>
        <taxon>Yersiniaceae</taxon>
        <taxon>Yersinia</taxon>
    </lineage>
</organism>
<reference key="1">
    <citation type="journal article" date="2011" name="J. Bacteriol.">
        <title>The main virulence determinant of Yersinia entomophaga MH96 is a broad-host-range toxin complex active against insects.</title>
        <authorList>
            <person name="Hurst M.R."/>
            <person name="Jones S.A."/>
            <person name="Binglin T."/>
            <person name="Harper L.A."/>
            <person name="Jackson T.A."/>
            <person name="Glare T.R."/>
        </authorList>
    </citation>
    <scope>NUCLEOTIDE SEQUENCE [GENOMIC DNA]</scope>
    <scope>IDENTIFICATION BY MASS SPECTROMETRY</scope>
    <scope>FUNCTION</scope>
    <scope>ACTIVITY REGULATION</scope>
    <scope>SUBUNIT</scope>
    <scope>SUBCELLULAR LOCATION</scope>
    <scope>DISRUPTION PHENOTYPE</scope>
    <source>
        <strain>ATCC BAA-1678 / DSM 22339 / MH96</strain>
    </source>
</reference>
<reference key="2">
    <citation type="journal article" date="2011" name="Proc. Natl. Acad. Sci. U.S.A.">
        <title>3D structure of the Yersinia entomophaga toxin complex and implications for insecticidal activity.</title>
        <authorList>
            <person name="Landsberg M.J."/>
            <person name="Jones S.A."/>
            <person name="Rothnagel R."/>
            <person name="Busby J.N."/>
            <person name="Marshall S.D."/>
            <person name="Simpson R.M."/>
            <person name="Lott J.S."/>
            <person name="Hankamer B."/>
            <person name="Hurst M.R."/>
        </authorList>
    </citation>
    <scope>ELECTRON MICROSCOPY (17.0 ANGSTROMS) OF YEN-TC:K9 COMPLEX</scope>
    <scope>FUNCTION</scope>
    <scope>SUBUNIT</scope>
    <source>
        <strain>ATCC BAA-1678 / DSM 22339 / MH96</strain>
    </source>
</reference>
<reference evidence="8 9" key="3">
    <citation type="journal article" date="2012" name="J. Mol. Biol.">
        <title>Structural analysis of Chi1 chitinase from Yen-Tc: the multisubunit insecticidal ABC toxin complex of Yersinia entomophaga.</title>
        <authorList>
            <person name="Busby J.N."/>
            <person name="Landsberg M.J."/>
            <person name="Simpson R.M."/>
            <person name="Jones S.A."/>
            <person name="Hankamer B."/>
            <person name="Hurst M.R."/>
            <person name="Lott J.S."/>
        </authorList>
    </citation>
    <scope>X-RAY CRYSTALLOGRAPHY (1.74 ANGSTROMS)</scope>
    <scope>FUNCTION</scope>
    <scope>CATALYTIC ACTIVITY</scope>
    <scope>BIOPHYSICOCHEMICAL PROPERTIES</scope>
    <source>
        <strain>ATCC BAA-1678 / DSM 22339 / MH96</strain>
    </source>
</reference>
<feature type="chain" id="PRO_0000445776" description="Chitinase 1">
    <location>
        <begin position="1"/>
        <end position="542"/>
    </location>
</feature>
<feature type="domain" description="GH18" evidence="1">
    <location>
        <begin position="68"/>
        <end position="506"/>
    </location>
</feature>
<feature type="active site" description="Proton donor" evidence="1">
    <location>
        <position position="256"/>
    </location>
</feature>
<feature type="binding site" evidence="1">
    <location>
        <begin position="186"/>
        <end position="187"/>
    </location>
    <ligand>
        <name>chitin</name>
        <dbReference type="ChEBI" id="CHEBI:17029"/>
    </ligand>
</feature>
<feature type="binding site" evidence="1">
    <location>
        <begin position="213"/>
        <end position="216"/>
    </location>
    <ligand>
        <name>chitin</name>
        <dbReference type="ChEBI" id="CHEBI:17029"/>
    </ligand>
</feature>
<feature type="binding site" evidence="1">
    <location>
        <position position="257"/>
    </location>
    <ligand>
        <name>chitin</name>
        <dbReference type="ChEBI" id="CHEBI:17029"/>
    </ligand>
</feature>
<feature type="binding site" evidence="1">
    <location>
        <begin position="323"/>
        <end position="326"/>
    </location>
    <ligand>
        <name>chitin</name>
        <dbReference type="ChEBI" id="CHEBI:17029"/>
    </ligand>
</feature>
<feature type="binding site" evidence="1">
    <location>
        <position position="486"/>
    </location>
    <ligand>
        <name>chitin</name>
        <dbReference type="ChEBI" id="CHEBI:17029"/>
    </ligand>
</feature>
<feature type="strand" evidence="10">
    <location>
        <begin position="8"/>
        <end position="10"/>
    </location>
</feature>
<feature type="helix" evidence="10">
    <location>
        <begin position="28"/>
        <end position="36"/>
    </location>
</feature>
<feature type="turn" evidence="10">
    <location>
        <begin position="40"/>
        <end position="42"/>
    </location>
</feature>
<feature type="helix" evidence="10">
    <location>
        <begin position="52"/>
        <end position="54"/>
    </location>
</feature>
<feature type="strand" evidence="10">
    <location>
        <begin position="69"/>
        <end position="75"/>
    </location>
</feature>
<feature type="turn" evidence="10">
    <location>
        <begin position="76"/>
        <end position="79"/>
    </location>
</feature>
<feature type="helix" evidence="10">
    <location>
        <begin position="82"/>
        <end position="84"/>
    </location>
</feature>
<feature type="helix" evidence="10">
    <location>
        <begin position="99"/>
        <end position="102"/>
    </location>
</feature>
<feature type="strand" evidence="10">
    <location>
        <begin position="105"/>
        <end position="107"/>
    </location>
</feature>
<feature type="strand" evidence="10">
    <location>
        <begin position="111"/>
        <end position="120"/>
    </location>
</feature>
<feature type="turn" evidence="10">
    <location>
        <begin position="124"/>
        <end position="126"/>
    </location>
</feature>
<feature type="turn" evidence="10">
    <location>
        <begin position="128"/>
        <end position="131"/>
    </location>
</feature>
<feature type="helix" evidence="10">
    <location>
        <begin position="132"/>
        <end position="137"/>
    </location>
</feature>
<feature type="helix" evidence="10">
    <location>
        <begin position="144"/>
        <end position="151"/>
    </location>
</feature>
<feature type="strand" evidence="10">
    <location>
        <begin position="155"/>
        <end position="158"/>
    </location>
</feature>
<feature type="helix" evidence="10">
    <location>
        <begin position="160"/>
        <end position="164"/>
    </location>
</feature>
<feature type="turn" evidence="10">
    <location>
        <begin position="168"/>
        <end position="171"/>
    </location>
</feature>
<feature type="helix" evidence="10">
    <location>
        <begin position="180"/>
        <end position="183"/>
    </location>
</feature>
<feature type="turn" evidence="10">
    <location>
        <begin position="186"/>
        <end position="188"/>
    </location>
</feature>
<feature type="helix" evidence="10">
    <location>
        <begin position="191"/>
        <end position="202"/>
    </location>
</feature>
<feature type="strand" evidence="10">
    <location>
        <begin position="207"/>
        <end position="213"/>
    </location>
</feature>
<feature type="helix" evidence="10">
    <location>
        <begin position="215"/>
        <end position="217"/>
    </location>
</feature>
<feature type="helix" evidence="10">
    <location>
        <begin position="221"/>
        <end position="226"/>
    </location>
</feature>
<feature type="helix" evidence="10">
    <location>
        <begin position="228"/>
        <end position="244"/>
    </location>
</feature>
<feature type="strand" evidence="10">
    <location>
        <begin position="250"/>
        <end position="254"/>
    </location>
</feature>
<feature type="turn" evidence="10">
    <location>
        <begin position="262"/>
        <end position="264"/>
    </location>
</feature>
<feature type="helix" evidence="10">
    <location>
        <begin position="271"/>
        <end position="284"/>
    </location>
</feature>
<feature type="strand" evidence="10">
    <location>
        <begin position="292"/>
        <end position="297"/>
    </location>
</feature>
<feature type="helix" evidence="10">
    <location>
        <begin position="301"/>
        <end position="307"/>
    </location>
</feature>
<feature type="helix" evidence="10">
    <location>
        <begin position="309"/>
        <end position="314"/>
    </location>
</feature>
<feature type="strand" evidence="10">
    <location>
        <begin position="319"/>
        <end position="322"/>
    </location>
</feature>
<feature type="strand" evidence="10">
    <location>
        <begin position="330"/>
        <end position="334"/>
    </location>
</feature>
<feature type="strand" evidence="10">
    <location>
        <begin position="348"/>
        <end position="350"/>
    </location>
</feature>
<feature type="helix" evidence="10">
    <location>
        <begin position="354"/>
        <end position="363"/>
    </location>
</feature>
<feature type="helix" evidence="10">
    <location>
        <begin position="369"/>
        <end position="371"/>
    </location>
</feature>
<feature type="strand" evidence="10">
    <location>
        <begin position="372"/>
        <end position="379"/>
    </location>
</feature>
<feature type="strand" evidence="10">
    <location>
        <begin position="381"/>
        <end position="388"/>
    </location>
</feature>
<feature type="turn" evidence="10">
    <location>
        <begin position="393"/>
        <end position="395"/>
    </location>
</feature>
<feature type="strand" evidence="10">
    <location>
        <begin position="400"/>
        <end position="403"/>
    </location>
</feature>
<feature type="strand" evidence="10">
    <location>
        <begin position="410"/>
        <end position="413"/>
    </location>
</feature>
<feature type="helix" evidence="10">
    <location>
        <begin position="419"/>
        <end position="425"/>
    </location>
</feature>
<feature type="turn" evidence="10">
    <location>
        <begin position="429"/>
        <end position="432"/>
    </location>
</feature>
<feature type="strand" evidence="10">
    <location>
        <begin position="433"/>
        <end position="435"/>
    </location>
</feature>
<feature type="strand" evidence="10">
    <location>
        <begin position="439"/>
        <end position="443"/>
    </location>
</feature>
<feature type="turn" evidence="10">
    <location>
        <begin position="444"/>
        <end position="447"/>
    </location>
</feature>
<feature type="strand" evidence="10">
    <location>
        <begin position="448"/>
        <end position="452"/>
    </location>
</feature>
<feature type="turn" evidence="10">
    <location>
        <begin position="454"/>
        <end position="456"/>
    </location>
</feature>
<feature type="strand" evidence="10">
    <location>
        <begin position="459"/>
        <end position="462"/>
    </location>
</feature>
<feature type="helix" evidence="10">
    <location>
        <begin position="465"/>
        <end position="478"/>
    </location>
</feature>
<feature type="strand" evidence="10">
    <location>
        <begin position="482"/>
        <end position="486"/>
    </location>
</feature>
<feature type="helix" evidence="10">
    <location>
        <begin position="488"/>
        <end position="490"/>
    </location>
</feature>
<feature type="helix" evidence="10">
    <location>
        <begin position="494"/>
        <end position="502"/>
    </location>
</feature>
<feature type="strand" evidence="10">
    <location>
        <begin position="507"/>
        <end position="509"/>
    </location>
</feature>
<feature type="helix" evidence="10">
    <location>
        <begin position="515"/>
        <end position="517"/>
    </location>
</feature>
<gene>
    <name evidence="5" type="primary">chi1</name>
</gene>
<sequence length="542" mass="60385">MEKEEKSNLIYDKDPGYVWDNKNECEGAAEETYQELNYEPSISADKLTWTPTRLAKTVFNTYEDDDDFNVLCYFTDWSQYDPRIINKEIRDTGGRSADILRLNTPDGRPFKRLIYSFGGLIGDKKYSADGNASIAVRLGVATDPDDAIANHKGKTIPVDPDGAVLASINCGFTKWEAGDANERYNQEKAKGLLGGFRLLHEADKELEFSLSIGGWSMSGLFSEIAKDEILRTNFVEGIKDFFQRFPMFSHLDIDWEYPGSIGAGNPNSPDDGANFAILIQQITDAKISNLKGISIASSADPAKIDAANIPALMDAGVTGINLMTYDFFTLGDGKLSHHTNIYRDPSDVYSKYSIDDAVTHLIDEKKVDPKAIFIGYAGYTRNAKNATITTSIPSEEALKGTYTDANQTLGSFEYSVLEWTDIICHYMDFEKGEGRNGYKLVHDKVAKADYLYSEATKVFISLDTPRSVRDKGRYVKDKGLGGLFIWSGDQDNGILTNAAHEGLKRRIKNKVIDMTPFYLDSDEELPTYTEPAEPQCEACNIK</sequence>
<accession>B6A876</accession>
<keyword id="KW-0002">3D-structure</keyword>
<keyword id="KW-0119">Carbohydrate metabolism</keyword>
<keyword id="KW-0146">Chitin degradation</keyword>
<keyword id="KW-0326">Glycosidase</keyword>
<keyword id="KW-0378">Hydrolase</keyword>
<keyword id="KW-0624">Polysaccharide degradation</keyword>
<keyword id="KW-0964">Secreted</keyword>
<keyword id="KW-0843">Virulence</keyword>
<protein>
    <recommendedName>
        <fullName evidence="5">Chitinase 1</fullName>
        <ecNumber evidence="7">3.2.1.14</ecNumber>
    </recommendedName>
</protein>
<dbReference type="EC" id="3.2.1.14" evidence="7"/>
<dbReference type="EMBL" id="DQ400808">
    <property type="protein sequence ID" value="ABG33870.1"/>
    <property type="molecule type" value="Genomic_DNA"/>
</dbReference>
<dbReference type="RefSeq" id="WP_235601002.1">
    <property type="nucleotide sequence ID" value="NZ_CP010029.1"/>
</dbReference>
<dbReference type="PDB" id="3OA5">
    <property type="method" value="X-ray"/>
    <property type="resolution" value="1.74 A"/>
    <property type="chains" value="A/B=1-542"/>
</dbReference>
<dbReference type="PDB" id="4A5Q">
    <property type="method" value="EM"/>
    <property type="resolution" value="17.00 A"/>
    <property type="chains" value="A/B/C/D/E=1-542"/>
</dbReference>
<dbReference type="PDBsum" id="3OA5"/>
<dbReference type="PDBsum" id="4A5Q"/>
<dbReference type="EMDB" id="EMD-20054"/>
<dbReference type="SMR" id="B6A876"/>
<dbReference type="DIP" id="DIP-60375N"/>
<dbReference type="IntAct" id="B6A876">
    <property type="interactions" value="3"/>
</dbReference>
<dbReference type="STRING" id="935293.PL78_03740"/>
<dbReference type="CAZy" id="GH18">
    <property type="family name" value="Glycoside Hydrolase Family 18"/>
</dbReference>
<dbReference type="EvolutionaryTrace" id="B6A876"/>
<dbReference type="GO" id="GO:0005576">
    <property type="term" value="C:extracellular region"/>
    <property type="evidence" value="ECO:0007669"/>
    <property type="project" value="UniProtKB-SubCell"/>
</dbReference>
<dbReference type="GO" id="GO:0008061">
    <property type="term" value="F:chitin binding"/>
    <property type="evidence" value="ECO:0007669"/>
    <property type="project" value="InterPro"/>
</dbReference>
<dbReference type="GO" id="GO:0008843">
    <property type="term" value="F:endochitinase activity"/>
    <property type="evidence" value="ECO:0007669"/>
    <property type="project" value="UniProtKB-EC"/>
</dbReference>
<dbReference type="GO" id="GO:0006032">
    <property type="term" value="P:chitin catabolic process"/>
    <property type="evidence" value="ECO:0007669"/>
    <property type="project" value="UniProtKB-KW"/>
</dbReference>
<dbReference type="GO" id="GO:0000272">
    <property type="term" value="P:polysaccharide catabolic process"/>
    <property type="evidence" value="ECO:0007669"/>
    <property type="project" value="UniProtKB-KW"/>
</dbReference>
<dbReference type="Gene3D" id="3.10.50.10">
    <property type="match status" value="1"/>
</dbReference>
<dbReference type="Gene3D" id="3.20.20.80">
    <property type="entry name" value="Glycosidases"/>
    <property type="match status" value="1"/>
</dbReference>
<dbReference type="InterPro" id="IPR011583">
    <property type="entry name" value="Chitinase_II/V-like_cat"/>
</dbReference>
<dbReference type="InterPro" id="IPR029070">
    <property type="entry name" value="Chitinase_insertion_sf"/>
</dbReference>
<dbReference type="InterPro" id="IPR001223">
    <property type="entry name" value="Glyco_hydro18_cat"/>
</dbReference>
<dbReference type="InterPro" id="IPR017853">
    <property type="entry name" value="Glycoside_hydrolase_SF"/>
</dbReference>
<dbReference type="InterPro" id="IPR050314">
    <property type="entry name" value="Glycosyl_Hydrlase_18"/>
</dbReference>
<dbReference type="PANTHER" id="PTHR11177">
    <property type="entry name" value="CHITINASE"/>
    <property type="match status" value="1"/>
</dbReference>
<dbReference type="PANTHER" id="PTHR11177:SF317">
    <property type="entry name" value="CHITINASE 12-RELATED"/>
    <property type="match status" value="1"/>
</dbReference>
<dbReference type="Pfam" id="PF00704">
    <property type="entry name" value="Glyco_hydro_18"/>
    <property type="match status" value="1"/>
</dbReference>
<dbReference type="SMART" id="SM00636">
    <property type="entry name" value="Glyco_18"/>
    <property type="match status" value="1"/>
</dbReference>
<dbReference type="SUPFAM" id="SSF51445">
    <property type="entry name" value="(Trans)glycosidases"/>
    <property type="match status" value="1"/>
</dbReference>
<dbReference type="SUPFAM" id="SSF54556">
    <property type="entry name" value="Chitinase insertion domain"/>
    <property type="match status" value="1"/>
</dbReference>
<dbReference type="PROSITE" id="PS51910">
    <property type="entry name" value="GH18_2"/>
    <property type="match status" value="1"/>
</dbReference>
<name>CHI1_YERET</name>